<name>Y34F_DROME</name>
<evidence type="ECO:0000255" key="1"/>
<evidence type="ECO:0000255" key="2">
    <source>
        <dbReference type="PROSITE-ProRule" id="PRU00084"/>
    </source>
</evidence>
<evidence type="ECO:0000255" key="3">
    <source>
        <dbReference type="PROSITE-ProRule" id="PRU00145"/>
    </source>
</evidence>
<evidence type="ECO:0000255" key="4">
    <source>
        <dbReference type="PROSITE-ProRule" id="PRU00359"/>
    </source>
</evidence>
<evidence type="ECO:0000256" key="5">
    <source>
        <dbReference type="SAM" id="MobiDB-lite"/>
    </source>
</evidence>
<evidence type="ECO:0000269" key="6">
    <source>
    </source>
</evidence>
<evidence type="ECO:0000303" key="7">
    <source ref="4"/>
</evidence>
<evidence type="ECO:0000305" key="8"/>
<evidence type="ECO:0000312" key="9">
    <source>
        <dbReference type="FlyBase" id="FBgn0264449"/>
    </source>
</evidence>
<accession>Q9W5D0</accession>
<accession>A8JUT7</accession>
<accession>A8JUT8</accession>
<accession>D8FT41</accession>
<accession>M9PDF0</accession>
<accession>M9PG59</accession>
<accession>M9PGC2</accession>
<accession>M9PGC6</accession>
<accession>M9PGJ1</accession>
<accession>M9PIN4</accession>
<accession>O77432</accession>
<accession>O77433</accession>
<accession>Q1RKT6</accession>
<protein>
    <recommendedName>
        <fullName>Uncharacterized protein CG43867</fullName>
    </recommendedName>
</protein>
<gene>
    <name type="ORF">CG43867</name>
</gene>
<comment type="alternative products">
    <event type="alternative splicing"/>
    <isoform>
        <id>Q9W5D0-1</id>
        <name evidence="9">D</name>
        <sequence type="displayed"/>
    </isoform>
    <isoform>
        <id>Q9W5D0-3</id>
        <name evidence="9">B</name>
        <name evidence="9">J</name>
        <sequence type="described" ref="VSP_053572 VSP_053573 VSP_053574 VSP_053575 VSP_053578"/>
    </isoform>
    <isoform>
        <id>Q9W5D0-4</id>
        <name evidence="9">I</name>
        <sequence type="described" ref="VSP_035867 VSP_053575 VSP_053577"/>
    </isoform>
    <isoform>
        <id>Q9W5D0-5</id>
        <name evidence="9">A</name>
        <sequence type="described" ref="VSP_053572 VSP_053573 VSP_053574 VSP_053575"/>
    </isoform>
    <isoform>
        <id>Q9W5D0-6</id>
        <name evidence="9">H</name>
        <sequence type="described" ref="VSP_053575 VSP_053576"/>
    </isoform>
    <isoform>
        <id>Q9W5D0-7</id>
        <name evidence="9">C</name>
        <sequence type="described" ref="VSP_053572 VSP_053573 VSP_053574 VSP_053578"/>
    </isoform>
    <isoform>
        <id>Q9W5D0-2</id>
        <name evidence="9">F</name>
        <sequence type="described" ref="VSP_035867"/>
    </isoform>
</comment>
<comment type="sequence caution" evidence="8">
    <conflict type="miscellaneous discrepancy">
        <sequence resource="EMBL-CDS" id="ABE73295"/>
    </conflict>
    <text>Contaminating sequence. Potential poly-A sequence.</text>
</comment>
<comment type="sequence caution" evidence="8">
    <conflict type="erroneous gene model prediction">
        <sequence resource="EMBL-CDS" id="CAA20900"/>
    </conflict>
</comment>
<comment type="sequence caution" evidence="8">
    <conflict type="erroneous gene model prediction">
        <sequence resource="EMBL-CDS" id="CAA20901"/>
    </conflict>
</comment>
<feature type="chain" id="PRO_0000219451" description="Uncharacterized protein CG43867">
    <location>
        <begin position="1"/>
        <end position="1820"/>
    </location>
</feature>
<feature type="domain" description="PH 1" evidence="3">
    <location>
        <begin position="909"/>
        <end position="1003"/>
    </location>
</feature>
<feature type="domain" description="PH 2" evidence="3">
    <location>
        <begin position="1017"/>
        <end position="1124"/>
    </location>
</feature>
<feature type="domain" description="MyTH4" evidence="4">
    <location>
        <begin position="1159"/>
        <end position="1378"/>
    </location>
</feature>
<feature type="domain" description="FERM" evidence="2">
    <location>
        <begin position="1389"/>
        <end position="1712"/>
    </location>
</feature>
<feature type="region of interest" description="Disordered" evidence="5">
    <location>
        <begin position="1"/>
        <end position="73"/>
    </location>
</feature>
<feature type="region of interest" description="Disordered" evidence="5">
    <location>
        <begin position="86"/>
        <end position="158"/>
    </location>
</feature>
<feature type="region of interest" description="Disordered" evidence="5">
    <location>
        <begin position="226"/>
        <end position="260"/>
    </location>
</feature>
<feature type="region of interest" description="Disordered" evidence="5">
    <location>
        <begin position="286"/>
        <end position="366"/>
    </location>
</feature>
<feature type="region of interest" description="Disordered" evidence="5">
    <location>
        <begin position="453"/>
        <end position="497"/>
    </location>
</feature>
<feature type="region of interest" description="Disordered" evidence="5">
    <location>
        <begin position="519"/>
        <end position="548"/>
    </location>
</feature>
<feature type="region of interest" description="Disordered" evidence="5">
    <location>
        <begin position="577"/>
        <end position="597"/>
    </location>
</feature>
<feature type="region of interest" description="Disordered" evidence="5">
    <location>
        <begin position="619"/>
        <end position="689"/>
    </location>
</feature>
<feature type="region of interest" description="Disordered" evidence="5">
    <location>
        <begin position="735"/>
        <end position="830"/>
    </location>
</feature>
<feature type="region of interest" description="Disordered" evidence="5">
    <location>
        <begin position="1713"/>
        <end position="1748"/>
    </location>
</feature>
<feature type="region of interest" description="Disordered" evidence="5">
    <location>
        <begin position="1764"/>
        <end position="1820"/>
    </location>
</feature>
<feature type="coiled-coil region" evidence="1">
    <location>
        <begin position="265"/>
        <end position="308"/>
    </location>
</feature>
<feature type="coiled-coil region" evidence="1">
    <location>
        <begin position="362"/>
        <end position="438"/>
    </location>
</feature>
<feature type="compositionally biased region" description="Polar residues" evidence="5">
    <location>
        <begin position="20"/>
        <end position="31"/>
    </location>
</feature>
<feature type="compositionally biased region" description="Low complexity" evidence="5">
    <location>
        <begin position="86"/>
        <end position="128"/>
    </location>
</feature>
<feature type="compositionally biased region" description="Basic residues" evidence="5">
    <location>
        <begin position="129"/>
        <end position="146"/>
    </location>
</feature>
<feature type="compositionally biased region" description="Low complexity" evidence="5">
    <location>
        <begin position="247"/>
        <end position="259"/>
    </location>
</feature>
<feature type="compositionally biased region" description="Basic and acidic residues" evidence="5">
    <location>
        <begin position="294"/>
        <end position="305"/>
    </location>
</feature>
<feature type="compositionally biased region" description="Low complexity" evidence="5">
    <location>
        <begin position="346"/>
        <end position="358"/>
    </location>
</feature>
<feature type="compositionally biased region" description="Polar residues" evidence="5">
    <location>
        <begin position="453"/>
        <end position="463"/>
    </location>
</feature>
<feature type="compositionally biased region" description="Low complexity" evidence="5">
    <location>
        <begin position="623"/>
        <end position="632"/>
    </location>
</feature>
<feature type="compositionally biased region" description="Gly residues" evidence="5">
    <location>
        <begin position="655"/>
        <end position="669"/>
    </location>
</feature>
<feature type="compositionally biased region" description="Low complexity" evidence="5">
    <location>
        <begin position="738"/>
        <end position="769"/>
    </location>
</feature>
<feature type="compositionally biased region" description="Polar residues" evidence="5">
    <location>
        <begin position="787"/>
        <end position="818"/>
    </location>
</feature>
<feature type="compositionally biased region" description="Polar residues" evidence="5">
    <location>
        <begin position="1714"/>
        <end position="1724"/>
    </location>
</feature>
<feature type="compositionally biased region" description="Low complexity" evidence="5">
    <location>
        <begin position="1764"/>
        <end position="1781"/>
    </location>
</feature>
<feature type="compositionally biased region" description="Basic and acidic residues" evidence="5">
    <location>
        <begin position="1805"/>
        <end position="1820"/>
    </location>
</feature>
<feature type="modified residue" description="Phosphoserine" evidence="6">
    <location>
        <position position="542"/>
    </location>
</feature>
<feature type="modified residue" description="Phosphoserine" evidence="6">
    <location>
        <position position="543"/>
    </location>
</feature>
<feature type="modified residue" description="Phosphoserine" evidence="6">
    <location>
        <position position="1073"/>
    </location>
</feature>
<feature type="modified residue" description="Phosphoserine" evidence="6">
    <location>
        <position position="1075"/>
    </location>
</feature>
<feature type="modified residue" description="Phosphoserine" evidence="6">
    <location>
        <position position="1077"/>
    </location>
</feature>
<feature type="splice variant" id="VSP_035867" description="In isoform F and isoform I." evidence="8">
    <location>
        <begin position="1"/>
        <end position="298"/>
    </location>
</feature>
<feature type="splice variant" id="VSP_053572" description="In isoform A, isoform B and isoform C." evidence="7">
    <original>QWTAASCDQHDQHDPPAVNRNSIEQRTPANNCEVDPMDATGSTK</original>
    <variation>SDEVPLGRLSHIFDTLTNLQQQQHLRSQEQLHSQQ</variation>
    <location>
        <begin position="2"/>
        <end position="45"/>
    </location>
</feature>
<feature type="splice variant" id="VSP_053573" description="In isoform A, isoform B and isoform C." evidence="7">
    <original>LPKQREADRPVSGSGGGSSSLTLSGAVTTSMEVTVSTTTTTTIIESSSSTNTTLEKNSPSPAGGSCSSGSGSLSPAYLQHHLQHHGSPLHHLQVHHHTAPPSPLAAVRSAQMGSSVANGAGPAAACLAVCCSPGSSHHHLGHVGHLATGHPLPHQLPHQLPHPSLYPLMAAAQLGYAGSSGPSSLVNSPALGRRKRYTSNSSNCSSQFNNNYAGLDVDSLD</original>
    <variation>SQLQPEPQQSSAEIRRRSASSSPSPSASASASTSGRATPSLGVASPLNSLQYYSHAHNYFLRPQEVAGSGYLHTFPSHFYHHQVHHLQQHSQPPSLPTQLGAARGSQSLQGSPLLAKRATSFSGQIPLAQGRFTASGTTAASGAIGLPASTPNSPRLLPRRAPRPPPIPAKPNQVKADQQSKDAQARNSTTTTVQATVNPVLAALDAPDAPWPHFSTLTEHLDVHQVNNYGQALPQINWQERCLELQLELHRSKNQAGRIR</variation>
    <location>
        <begin position="49"/>
        <end position="269"/>
    </location>
</feature>
<feature type="splice variant" id="VSP_053574" description="In isoform A, isoform B and isoform C." evidence="7">
    <original>R</original>
    <variation>RE</variation>
    <location>
        <position position="273"/>
    </location>
</feature>
<feature type="splice variant" id="VSP_053575" description="In isoform A, isoform B, isoform H and isoform I." evidence="8">
    <location>
        <begin position="784"/>
        <end position="867"/>
    </location>
</feature>
<feature type="splice variant" id="VSP_053576" description="In isoform H." evidence="8">
    <location>
        <begin position="1246"/>
        <end position="1287"/>
    </location>
</feature>
<feature type="splice variant" id="VSP_053577" description="In isoform I." evidence="8">
    <location>
        <begin position="1246"/>
        <end position="1255"/>
    </location>
</feature>
<feature type="splice variant" id="VSP_053578" description="In isoform B and isoform C." evidence="7">
    <location>
        <begin position="1256"/>
        <end position="1287"/>
    </location>
</feature>
<sequence length="1820" mass="198641">MQWTAASCDQHDQHDPPAVNRNSIEQRTPANNCEVDPMDATGSTKHPHLPKQREADRPVSGSGGGSSSLTLSGAVTTSMEVTVSTTTTTTIIESSSSTNTTLEKNSPSPAGGSCSSGSGSLSPAYLQHHLQHHGSPLHHLQVHHHTAPPSPLAAVRSAQMGSSVANGAGPAAACLAVCCSPGSSHHHLGHVGHLATGHPLPHQLPHQLPHPSLYPLMAAAQLGYAGSSGPSSLVNSPALGRRKRYTSNSSNCSSQFNNNYAGLDVDSLDDMLRKLTELEQRVIEAEERAEEAEDKVRAMEQRLSEWPKPPPQQAQHPHSHSHPHQPIPSHPQEQQAKNHCSPSHQASGGATAGAAGSGLPPTQETEKTITSLEIQVEEQRQLRLHDARQIEAKAAKIKEWVNNKLRDLEEQNQLLREQNVKCNQQLELLKNHIANQSQRHSIVGPVRNSLSLDVQDFTGSGSNPEHRRRSESLDPQEIIGRPLTSSYPHHQHRRNLSMEPQELERNLVAAVDGLTLAPLSSISNKAPGGVPTESGVVTRPDSSDTDTAHDYAEIYTPSCEKLPAWMKNNPALMASGGNSSTTTTTTSELGVPRPPTPPLHRFPSWEAKIYQVANDGLAGAGTGTSTAESTASQEPDIQDGMGTNLSNGRRHGHGHGSGTGIGTGDGHGTLGSTPGTPLPPSRQQQTASGGFCDISVPVYATVKGRASQIRSMPFTGDSSDDSSDGEDHAVMLTHHSHNSSSTDNTETSTSGSASSPSKSLKTSSSLSPAKRSGSESPKNAKARVHIQSRTSTTPSSRINQHLQPSQHQHHTLSNQNHGHQLGAYTVTPSSGQLSLPRYHANALQPGSLPSPLQHMRGTVISDLSFESGLSDDYALPPDAVSESTCMDASMPSLLMRQSYVDSPSKKIESLEKMGHLAKLGGKLKTWRKRWFVLKNGSLNYWKSQHDVQRKPQGQIQLDEVCRINRAEGASTFEIDTGKKVYYLTADSHATMDDWIRVLQNVQRRNATKLLLSRDDQKPTVQGWVTKVKNGHPKKCWCVLLGKMFLYFKAPAETNPLGQINMRDARVEEVEHVSDSDSEEREDAAQDQARLTVAIYPAHQGPTYLILSGKPERDNWLYHLTVVSGGGPSAGTQYEQLVQKLMETDGDPNCVLWRHPILLHTKDTITAPLSSMHTETMQPEAIKLFKSIQLFMSVAVNQPGIDYHVVLAQNALQHALDMPELQTEMICILIKQTSRHLGQKLSVGVQVNKKLGKQTRQLLLCATQSLFTCDTQQAGHAQANGSSPTSIQAPSATPIIDCKSNPPVYSFVQGWQLLALAVSLFVPRSSRLLWYLKLHLSRNADTKTETGKYAAYCERALERTLKNGGRETKPSRMEVLSILLKNPYHHSLPHAIPVHMMNSTYQVVSFDGSTTIEEFQATLAHELGTRDATNGFCLFSDDPIEKDLEHYLEPLAKLCDVISKWETALREKGSGKFENSRVIQLSYKNRLYWKHTIKCETDKERLLLCYQTNSQIVQGRFPLSRELALELASLMSQIDMGDYSLEKSRDVGVGLKGLDKFYPYRYRDALGAEQLKDVQELLVSKWMLLKGRSTLDCVRIYLTCCRKWPYFGACLFQAKPRQSPESNTASGATPVAWLAVAEDALNVLELSTMAPVARYPYSSVMTFGGCQDDFMLVVSHDDGGGGEQKLLFAMSKPKILEITLLIADYMNALGHTVPGTPQMNSLTRNGSHRSLRTSQRPNLGGGSAVATGFSTNATTTAHNTLNSHATHTLNSNHSHTLSSSHHAGGGSQPGTLSSGHHQHHHIQQHHQPDILKSTPDHQRIK</sequence>
<dbReference type="EMBL" id="AE014298">
    <property type="protein sequence ID" value="ABW09321.2"/>
    <property type="molecule type" value="Genomic_DNA"/>
</dbReference>
<dbReference type="EMBL" id="AE014298">
    <property type="protein sequence ID" value="ABW09322.1"/>
    <property type="molecule type" value="Genomic_DNA"/>
</dbReference>
<dbReference type="EMBL" id="AE014298">
    <property type="protein sequence ID" value="AGB94950.1"/>
    <property type="molecule type" value="Genomic_DNA"/>
</dbReference>
<dbReference type="EMBL" id="AE014298">
    <property type="protein sequence ID" value="AGB94951.1"/>
    <property type="molecule type" value="Genomic_DNA"/>
</dbReference>
<dbReference type="EMBL" id="AE014298">
    <property type="protein sequence ID" value="AGB94952.1"/>
    <property type="molecule type" value="Genomic_DNA"/>
</dbReference>
<dbReference type="EMBL" id="AE014298">
    <property type="protein sequence ID" value="AGB94953.2"/>
    <property type="molecule type" value="Genomic_DNA"/>
</dbReference>
<dbReference type="EMBL" id="AE014298">
    <property type="protein sequence ID" value="AGB94954.1"/>
    <property type="molecule type" value="Genomic_DNA"/>
</dbReference>
<dbReference type="EMBL" id="AE014298">
    <property type="protein sequence ID" value="AGB94955.1"/>
    <property type="molecule type" value="Genomic_DNA"/>
</dbReference>
<dbReference type="EMBL" id="AL031583">
    <property type="protein sequence ID" value="CAA20900.1"/>
    <property type="status" value="ALT_SEQ"/>
    <property type="molecule type" value="Genomic_DNA"/>
</dbReference>
<dbReference type="EMBL" id="AL031583">
    <property type="protein sequence ID" value="CAA20901.1"/>
    <property type="status" value="ALT_SEQ"/>
    <property type="molecule type" value="Genomic_DNA"/>
</dbReference>
<dbReference type="EMBL" id="BT025124">
    <property type="protein sequence ID" value="ABE73295.1"/>
    <property type="status" value="ALT_SEQ"/>
    <property type="molecule type" value="mRNA"/>
</dbReference>
<dbReference type="EMBL" id="BT125063">
    <property type="protein sequence ID" value="ADK27790.1"/>
    <property type="molecule type" value="mRNA"/>
</dbReference>
<dbReference type="PIR" id="T13475">
    <property type="entry name" value="T13475"/>
</dbReference>
<dbReference type="PIR" id="T13476">
    <property type="entry name" value="T13476"/>
</dbReference>
<dbReference type="RefSeq" id="NP_001096860.2">
    <molecule id="Q9W5D0-1"/>
    <property type="nucleotide sequence ID" value="NM_001103390.2"/>
</dbReference>
<dbReference type="RefSeq" id="NP_001096861.1">
    <molecule id="Q9W5D0-2"/>
    <property type="nucleotide sequence ID" value="NM_001103391.1"/>
</dbReference>
<dbReference type="RefSeq" id="NP_001259104.1">
    <molecule id="Q9W5D0-7"/>
    <property type="nucleotide sequence ID" value="NM_001272175.1"/>
</dbReference>
<dbReference type="RefSeq" id="NP_001259105.1">
    <molecule id="Q9W5D0-4"/>
    <property type="nucleotide sequence ID" value="NM_001272176.1"/>
</dbReference>
<dbReference type="RefSeq" id="NP_001259106.1">
    <molecule id="Q9W5D0-6"/>
    <property type="nucleotide sequence ID" value="NM_001272177.1"/>
</dbReference>
<dbReference type="RefSeq" id="NP_001259107.2">
    <molecule id="Q9W5D0-3"/>
    <property type="nucleotide sequence ID" value="NM_001272178.2"/>
</dbReference>
<dbReference type="RefSeq" id="NP_001259108.1">
    <molecule id="Q9W5D0-3"/>
    <property type="nucleotide sequence ID" value="NM_001272179.1"/>
</dbReference>
<dbReference type="RefSeq" id="NP_001259109.1">
    <molecule id="Q9W5D0-5"/>
    <property type="nucleotide sequence ID" value="NM_001272180.1"/>
</dbReference>
<dbReference type="SMR" id="Q9W5D0"/>
<dbReference type="BioGRID" id="57599">
    <property type="interactions" value="6"/>
</dbReference>
<dbReference type="FunCoup" id="Q9W5D0">
    <property type="interactions" value="45"/>
</dbReference>
<dbReference type="IntAct" id="Q9W5D0">
    <property type="interactions" value="5"/>
</dbReference>
<dbReference type="STRING" id="7227.FBpp0310016"/>
<dbReference type="GlyGen" id="Q9W5D0">
    <property type="glycosylation" value="2 sites"/>
</dbReference>
<dbReference type="iPTMnet" id="Q9W5D0"/>
<dbReference type="PaxDb" id="7227-FBpp0304853"/>
<dbReference type="EnsemblMetazoa" id="FBtr0332604">
    <molecule id="Q9W5D0-7"/>
    <property type="protein sequence ID" value="FBpp0304853"/>
    <property type="gene ID" value="FBgn0264449"/>
</dbReference>
<dbReference type="EnsemblMetazoa" id="FBtr0332605">
    <molecule id="Q9W5D0-4"/>
    <property type="protein sequence ID" value="FBpp0304854"/>
    <property type="gene ID" value="FBgn0264449"/>
</dbReference>
<dbReference type="EnsemblMetazoa" id="FBtr0332606">
    <molecule id="Q9W5D0-6"/>
    <property type="protein sequence ID" value="FBpp0304855"/>
    <property type="gene ID" value="FBgn0264449"/>
</dbReference>
<dbReference type="EnsemblMetazoa" id="FBtr0332609">
    <molecule id="Q9W5D0-1"/>
    <property type="protein sequence ID" value="FBpp0304858"/>
    <property type="gene ID" value="FBgn0264449"/>
</dbReference>
<dbReference type="EnsemblMetazoa" id="FBtr0332610">
    <molecule id="Q9W5D0-2"/>
    <property type="protein sequence ID" value="FBpp0304859"/>
    <property type="gene ID" value="FBgn0264449"/>
</dbReference>
<dbReference type="EnsemblMetazoa" id="FBtr0332611">
    <molecule id="Q9W5D0-3"/>
    <property type="protein sequence ID" value="FBpp0304860"/>
    <property type="gene ID" value="FBgn0264449"/>
</dbReference>
<dbReference type="EnsemblMetazoa" id="FBtr0332612">
    <molecule id="Q9W5D0-5"/>
    <property type="protein sequence ID" value="FBpp0304861"/>
    <property type="gene ID" value="FBgn0264449"/>
</dbReference>
<dbReference type="EnsemblMetazoa" id="FBtr0343358">
    <molecule id="Q9W5D0-3"/>
    <property type="protein sequence ID" value="FBpp0310015"/>
    <property type="gene ID" value="FBgn0264449"/>
</dbReference>
<dbReference type="GeneID" id="31031"/>
<dbReference type="KEGG" id="dme:Dmel_CG43867"/>
<dbReference type="UCSC" id="CG42248-RD">
    <molecule id="Q9W5D0-1"/>
    <property type="organism name" value="d. melanogaster"/>
</dbReference>
<dbReference type="AGR" id="FB:FBgn0264449"/>
<dbReference type="FlyBase" id="FBgn0264449">
    <property type="gene designation" value="CG43867"/>
</dbReference>
<dbReference type="VEuPathDB" id="VectorBase:FBgn0264449"/>
<dbReference type="eggNOG" id="KOG0248">
    <property type="taxonomic scope" value="Eukaryota"/>
</dbReference>
<dbReference type="GeneTree" id="ENSGT00940000167791"/>
<dbReference type="InParanoid" id="Q9W5D0"/>
<dbReference type="OMA" id="FYPIRYR"/>
<dbReference type="OrthoDB" id="6285196at2759"/>
<dbReference type="PhylomeDB" id="Q9W5D0"/>
<dbReference type="BioGRID-ORCS" id="31031">
    <property type="hits" value="0 hits in 3 CRISPR screens"/>
</dbReference>
<dbReference type="GenomeRNAi" id="31031"/>
<dbReference type="PRO" id="PR:Q9W5D0"/>
<dbReference type="Proteomes" id="UP000000803">
    <property type="component" value="Chromosome X"/>
</dbReference>
<dbReference type="Bgee" id="FBgn0264449">
    <property type="expression patterns" value="Expressed in distal medullary amacrine neuron Dm11 in insect head and 239 other cell types or tissues"/>
</dbReference>
<dbReference type="ExpressionAtlas" id="Q9W5D0">
    <property type="expression patterns" value="baseline and differential"/>
</dbReference>
<dbReference type="GO" id="GO:0071944">
    <property type="term" value="C:cell periphery"/>
    <property type="evidence" value="ECO:0007669"/>
    <property type="project" value="UniProtKB-ARBA"/>
</dbReference>
<dbReference type="GO" id="GO:0005856">
    <property type="term" value="C:cytoskeleton"/>
    <property type="evidence" value="ECO:0007669"/>
    <property type="project" value="InterPro"/>
</dbReference>
<dbReference type="GO" id="GO:0009887">
    <property type="term" value="P:animal organ morphogenesis"/>
    <property type="evidence" value="ECO:0007669"/>
    <property type="project" value="UniProtKB-ARBA"/>
</dbReference>
<dbReference type="GO" id="GO:0030182">
    <property type="term" value="P:neuron differentiation"/>
    <property type="evidence" value="ECO:0007669"/>
    <property type="project" value="UniProtKB-ARBA"/>
</dbReference>
<dbReference type="CDD" id="cd14473">
    <property type="entry name" value="FERM_B-lobe"/>
    <property type="match status" value="1"/>
</dbReference>
<dbReference type="CDD" id="cd17094">
    <property type="entry name" value="FERM_F1_Max1_like"/>
    <property type="match status" value="1"/>
</dbReference>
<dbReference type="CDD" id="cd13282">
    <property type="entry name" value="PH1_PLEKHH1_PLEKHH2"/>
    <property type="match status" value="1"/>
</dbReference>
<dbReference type="FunFam" id="2.30.29.30:FF:000286">
    <property type="entry name" value="PH-protein kinase domain containing protein"/>
    <property type="match status" value="1"/>
</dbReference>
<dbReference type="Gene3D" id="1.20.80.10">
    <property type="match status" value="1"/>
</dbReference>
<dbReference type="Gene3D" id="1.25.40.530">
    <property type="entry name" value="MyTH4 domain"/>
    <property type="match status" value="1"/>
</dbReference>
<dbReference type="Gene3D" id="3.10.20.90">
    <property type="entry name" value="Phosphatidylinositol 3-kinase Catalytic Subunit, Chain A, domain 1"/>
    <property type="match status" value="1"/>
</dbReference>
<dbReference type="Gene3D" id="2.30.29.30">
    <property type="entry name" value="Pleckstrin-homology domain (PH domain)/Phosphotyrosine-binding domain (PTB)"/>
    <property type="match status" value="3"/>
</dbReference>
<dbReference type="InterPro" id="IPR019749">
    <property type="entry name" value="Band_41_domain"/>
</dbReference>
<dbReference type="InterPro" id="IPR014352">
    <property type="entry name" value="FERM/acyl-CoA-bd_prot_sf"/>
</dbReference>
<dbReference type="InterPro" id="IPR035963">
    <property type="entry name" value="FERM_2"/>
</dbReference>
<dbReference type="InterPro" id="IPR019748">
    <property type="entry name" value="FERM_central"/>
</dbReference>
<dbReference type="InterPro" id="IPR000299">
    <property type="entry name" value="FERM_domain"/>
</dbReference>
<dbReference type="InterPro" id="IPR000857">
    <property type="entry name" value="MyTH4_dom"/>
</dbReference>
<dbReference type="InterPro" id="IPR038185">
    <property type="entry name" value="MyTH4_dom_sf"/>
</dbReference>
<dbReference type="InterPro" id="IPR011993">
    <property type="entry name" value="PH-like_dom_sf"/>
</dbReference>
<dbReference type="InterPro" id="IPR001849">
    <property type="entry name" value="PH_domain"/>
</dbReference>
<dbReference type="InterPro" id="IPR029071">
    <property type="entry name" value="Ubiquitin-like_domsf"/>
</dbReference>
<dbReference type="PANTHER" id="PTHR22903:SF8">
    <property type="entry name" value="MAX-1A"/>
    <property type="match status" value="1"/>
</dbReference>
<dbReference type="PANTHER" id="PTHR22903">
    <property type="entry name" value="PLEKHH PROTEIN"/>
    <property type="match status" value="1"/>
</dbReference>
<dbReference type="Pfam" id="PF00373">
    <property type="entry name" value="FERM_M"/>
    <property type="match status" value="1"/>
</dbReference>
<dbReference type="Pfam" id="PF00784">
    <property type="entry name" value="MyTH4"/>
    <property type="match status" value="1"/>
</dbReference>
<dbReference type="Pfam" id="PF00169">
    <property type="entry name" value="PH"/>
    <property type="match status" value="2"/>
</dbReference>
<dbReference type="Pfam" id="PF21989">
    <property type="entry name" value="RA_2"/>
    <property type="match status" value="1"/>
</dbReference>
<dbReference type="SMART" id="SM00295">
    <property type="entry name" value="B41"/>
    <property type="match status" value="1"/>
</dbReference>
<dbReference type="SMART" id="SM00139">
    <property type="entry name" value="MyTH4"/>
    <property type="match status" value="1"/>
</dbReference>
<dbReference type="SMART" id="SM00233">
    <property type="entry name" value="PH"/>
    <property type="match status" value="2"/>
</dbReference>
<dbReference type="SUPFAM" id="SSF50729">
    <property type="entry name" value="PH domain-like"/>
    <property type="match status" value="2"/>
</dbReference>
<dbReference type="SUPFAM" id="SSF47031">
    <property type="entry name" value="Second domain of FERM"/>
    <property type="match status" value="1"/>
</dbReference>
<dbReference type="SUPFAM" id="SSF54236">
    <property type="entry name" value="Ubiquitin-like"/>
    <property type="match status" value="1"/>
</dbReference>
<dbReference type="PROSITE" id="PS50057">
    <property type="entry name" value="FERM_3"/>
    <property type="match status" value="1"/>
</dbReference>
<dbReference type="PROSITE" id="PS51016">
    <property type="entry name" value="MYTH4"/>
    <property type="match status" value="1"/>
</dbReference>
<dbReference type="PROSITE" id="PS50003">
    <property type="entry name" value="PH_DOMAIN"/>
    <property type="match status" value="2"/>
</dbReference>
<organism>
    <name type="scientific">Drosophila melanogaster</name>
    <name type="common">Fruit fly</name>
    <dbReference type="NCBI Taxonomy" id="7227"/>
    <lineage>
        <taxon>Eukaryota</taxon>
        <taxon>Metazoa</taxon>
        <taxon>Ecdysozoa</taxon>
        <taxon>Arthropoda</taxon>
        <taxon>Hexapoda</taxon>
        <taxon>Insecta</taxon>
        <taxon>Pterygota</taxon>
        <taxon>Neoptera</taxon>
        <taxon>Endopterygota</taxon>
        <taxon>Diptera</taxon>
        <taxon>Brachycera</taxon>
        <taxon>Muscomorpha</taxon>
        <taxon>Ephydroidea</taxon>
        <taxon>Drosophilidae</taxon>
        <taxon>Drosophila</taxon>
        <taxon>Sophophora</taxon>
    </lineage>
</organism>
<reference evidence="8" key="1">
    <citation type="journal article" date="2000" name="Science">
        <title>The genome sequence of Drosophila melanogaster.</title>
        <authorList>
            <person name="Adams M.D."/>
            <person name="Celniker S.E."/>
            <person name="Holt R.A."/>
            <person name="Evans C.A."/>
            <person name="Gocayne J.D."/>
            <person name="Amanatides P.G."/>
            <person name="Scherer S.E."/>
            <person name="Li P.W."/>
            <person name="Hoskins R.A."/>
            <person name="Galle R.F."/>
            <person name="George R.A."/>
            <person name="Lewis S.E."/>
            <person name="Richards S."/>
            <person name="Ashburner M."/>
            <person name="Henderson S.N."/>
            <person name="Sutton G.G."/>
            <person name="Wortman J.R."/>
            <person name="Yandell M.D."/>
            <person name="Zhang Q."/>
            <person name="Chen L.X."/>
            <person name="Brandon R.C."/>
            <person name="Rogers Y.-H.C."/>
            <person name="Blazej R.G."/>
            <person name="Champe M."/>
            <person name="Pfeiffer B.D."/>
            <person name="Wan K.H."/>
            <person name="Doyle C."/>
            <person name="Baxter E.G."/>
            <person name="Helt G."/>
            <person name="Nelson C.R."/>
            <person name="Miklos G.L.G."/>
            <person name="Abril J.F."/>
            <person name="Agbayani A."/>
            <person name="An H.-J."/>
            <person name="Andrews-Pfannkoch C."/>
            <person name="Baldwin D."/>
            <person name="Ballew R.M."/>
            <person name="Basu A."/>
            <person name="Baxendale J."/>
            <person name="Bayraktaroglu L."/>
            <person name="Beasley E.M."/>
            <person name="Beeson K.Y."/>
            <person name="Benos P.V."/>
            <person name="Berman B.P."/>
            <person name="Bhandari D."/>
            <person name="Bolshakov S."/>
            <person name="Borkova D."/>
            <person name="Botchan M.R."/>
            <person name="Bouck J."/>
            <person name="Brokstein P."/>
            <person name="Brottier P."/>
            <person name="Burtis K.C."/>
            <person name="Busam D.A."/>
            <person name="Butler H."/>
            <person name="Cadieu E."/>
            <person name="Center A."/>
            <person name="Chandra I."/>
            <person name="Cherry J.M."/>
            <person name="Cawley S."/>
            <person name="Dahlke C."/>
            <person name="Davenport L.B."/>
            <person name="Davies P."/>
            <person name="de Pablos B."/>
            <person name="Delcher A."/>
            <person name="Deng Z."/>
            <person name="Mays A.D."/>
            <person name="Dew I."/>
            <person name="Dietz S.M."/>
            <person name="Dodson K."/>
            <person name="Doup L.E."/>
            <person name="Downes M."/>
            <person name="Dugan-Rocha S."/>
            <person name="Dunkov B.C."/>
            <person name="Dunn P."/>
            <person name="Durbin K.J."/>
            <person name="Evangelista C.C."/>
            <person name="Ferraz C."/>
            <person name="Ferriera S."/>
            <person name="Fleischmann W."/>
            <person name="Fosler C."/>
            <person name="Gabrielian A.E."/>
            <person name="Garg N.S."/>
            <person name="Gelbart W.M."/>
            <person name="Glasser K."/>
            <person name="Glodek A."/>
            <person name="Gong F."/>
            <person name="Gorrell J.H."/>
            <person name="Gu Z."/>
            <person name="Guan P."/>
            <person name="Harris M."/>
            <person name="Harris N.L."/>
            <person name="Harvey D.A."/>
            <person name="Heiman T.J."/>
            <person name="Hernandez J.R."/>
            <person name="Houck J."/>
            <person name="Hostin D."/>
            <person name="Houston K.A."/>
            <person name="Howland T.J."/>
            <person name="Wei M.-H."/>
            <person name="Ibegwam C."/>
            <person name="Jalali M."/>
            <person name="Kalush F."/>
            <person name="Karpen G.H."/>
            <person name="Ke Z."/>
            <person name="Kennison J.A."/>
            <person name="Ketchum K.A."/>
            <person name="Kimmel B.E."/>
            <person name="Kodira C.D."/>
            <person name="Kraft C.L."/>
            <person name="Kravitz S."/>
            <person name="Kulp D."/>
            <person name="Lai Z."/>
            <person name="Lasko P."/>
            <person name="Lei Y."/>
            <person name="Levitsky A.A."/>
            <person name="Li J.H."/>
            <person name="Li Z."/>
            <person name="Liang Y."/>
            <person name="Lin X."/>
            <person name="Liu X."/>
            <person name="Mattei B."/>
            <person name="McIntosh T.C."/>
            <person name="McLeod M.P."/>
            <person name="McPherson D."/>
            <person name="Merkulov G."/>
            <person name="Milshina N.V."/>
            <person name="Mobarry C."/>
            <person name="Morris J."/>
            <person name="Moshrefi A."/>
            <person name="Mount S.M."/>
            <person name="Moy M."/>
            <person name="Murphy B."/>
            <person name="Murphy L."/>
            <person name="Muzny D.M."/>
            <person name="Nelson D.L."/>
            <person name="Nelson D.R."/>
            <person name="Nelson K.A."/>
            <person name="Nixon K."/>
            <person name="Nusskern D.R."/>
            <person name="Pacleb J.M."/>
            <person name="Palazzolo M."/>
            <person name="Pittman G.S."/>
            <person name="Pan S."/>
            <person name="Pollard J."/>
            <person name="Puri V."/>
            <person name="Reese M.G."/>
            <person name="Reinert K."/>
            <person name="Remington K."/>
            <person name="Saunders R.D.C."/>
            <person name="Scheeler F."/>
            <person name="Shen H."/>
            <person name="Shue B.C."/>
            <person name="Siden-Kiamos I."/>
            <person name="Simpson M."/>
            <person name="Skupski M.P."/>
            <person name="Smith T.J."/>
            <person name="Spier E."/>
            <person name="Spradling A.C."/>
            <person name="Stapleton M."/>
            <person name="Strong R."/>
            <person name="Sun E."/>
            <person name="Svirskas R."/>
            <person name="Tector C."/>
            <person name="Turner R."/>
            <person name="Venter E."/>
            <person name="Wang A.H."/>
            <person name="Wang X."/>
            <person name="Wang Z.-Y."/>
            <person name="Wassarman D.A."/>
            <person name="Weinstock G.M."/>
            <person name="Weissenbach J."/>
            <person name="Williams S.M."/>
            <person name="Woodage T."/>
            <person name="Worley K.C."/>
            <person name="Wu D."/>
            <person name="Yang S."/>
            <person name="Yao Q.A."/>
            <person name="Ye J."/>
            <person name="Yeh R.-F."/>
            <person name="Zaveri J.S."/>
            <person name="Zhan M."/>
            <person name="Zhang G."/>
            <person name="Zhao Q."/>
            <person name="Zheng L."/>
            <person name="Zheng X.H."/>
            <person name="Zhong F.N."/>
            <person name="Zhong W."/>
            <person name="Zhou X."/>
            <person name="Zhu S.C."/>
            <person name="Zhu X."/>
            <person name="Smith H.O."/>
            <person name="Gibbs R.A."/>
            <person name="Myers E.W."/>
            <person name="Rubin G.M."/>
            <person name="Venter J.C."/>
        </authorList>
    </citation>
    <scope>NUCLEOTIDE SEQUENCE [LARGE SCALE GENOMIC DNA]</scope>
    <source>
        <strain>Berkeley</strain>
    </source>
</reference>
<reference key="2">
    <citation type="journal article" date="2002" name="Genome Biol.">
        <title>Annotation of the Drosophila melanogaster euchromatic genome: a systematic review.</title>
        <authorList>
            <person name="Misra S."/>
            <person name="Crosby M.A."/>
            <person name="Mungall C.J."/>
            <person name="Matthews B.B."/>
            <person name="Campbell K.S."/>
            <person name="Hradecky P."/>
            <person name="Huang Y."/>
            <person name="Kaminker J.S."/>
            <person name="Millburn G.H."/>
            <person name="Prochnik S.E."/>
            <person name="Smith C.D."/>
            <person name="Tupy J.L."/>
            <person name="Whitfield E.J."/>
            <person name="Bayraktaroglu L."/>
            <person name="Berman B.P."/>
            <person name="Bettencourt B.R."/>
            <person name="Celniker S.E."/>
            <person name="de Grey A.D.N.J."/>
            <person name="Drysdale R.A."/>
            <person name="Harris N.L."/>
            <person name="Richter J."/>
            <person name="Russo S."/>
            <person name="Schroeder A.J."/>
            <person name="Shu S.Q."/>
            <person name="Stapleton M."/>
            <person name="Yamada C."/>
            <person name="Ashburner M."/>
            <person name="Gelbart W.M."/>
            <person name="Rubin G.M."/>
            <person name="Lewis S.E."/>
        </authorList>
    </citation>
    <scope>GENOME REANNOTATION</scope>
    <scope>ALTERNATIVE SPLICING</scope>
    <source>
        <strain>Berkeley</strain>
    </source>
</reference>
<reference evidence="8" key="3">
    <citation type="journal article" date="2000" name="Science">
        <title>From sequence to chromosome: the tip of the X chromosome of D. melanogaster.</title>
        <authorList>
            <person name="Benos P.V."/>
            <person name="Gatt M.K."/>
            <person name="Ashburner M."/>
            <person name="Murphy L."/>
            <person name="Harris D."/>
            <person name="Barrell B.G."/>
            <person name="Ferraz C."/>
            <person name="Vidal S."/>
            <person name="Brun C."/>
            <person name="Demailles J."/>
            <person name="Cadieu E."/>
            <person name="Dreano S."/>
            <person name="Gloux S."/>
            <person name="Lelaure V."/>
            <person name="Mottier S."/>
            <person name="Galibert F."/>
            <person name="Borkova D."/>
            <person name="Minana B."/>
            <person name="Kafatos F.C."/>
            <person name="Louis C."/>
            <person name="Siden-Kiamos I."/>
            <person name="Bolshakov S."/>
            <person name="Papagiannakis G."/>
            <person name="Spanos L."/>
            <person name="Cox S."/>
            <person name="Madueno E."/>
            <person name="de Pablos B."/>
            <person name="Modolell J."/>
            <person name="Peter A."/>
            <person name="Schoettler P."/>
            <person name="Werner M."/>
            <person name="Mourkioti F."/>
            <person name="Beinert N."/>
            <person name="Dowe G."/>
            <person name="Schaefer U."/>
            <person name="Jaeckle H."/>
            <person name="Bucheton A."/>
            <person name="Callister D.M."/>
            <person name="Campbell L.A."/>
            <person name="Darlamitsou A."/>
            <person name="Henderson N.S."/>
            <person name="McMillan P.J."/>
            <person name="Salles C."/>
            <person name="Tait E.A."/>
            <person name="Valenti P."/>
            <person name="Saunders R.D.C."/>
            <person name="Glover D.M."/>
        </authorList>
    </citation>
    <scope>NUCLEOTIDE SEQUENCE [LARGE SCALE GENOMIC DNA]</scope>
    <scope>ALTERNATIVE SPLICING</scope>
    <source>
        <strain>Oregon-R</strain>
    </source>
</reference>
<reference evidence="8" key="4">
    <citation type="submission" date="2010-07" db="EMBL/GenBank/DDBJ databases">
        <authorList>
            <person name="Stapleton M."/>
            <person name="Booth B."/>
            <person name="Carlson J."/>
            <person name="Chavez C."/>
            <person name="Frise E."/>
            <person name="George R."/>
            <person name="Pacleb J."/>
            <person name="Park S."/>
            <person name="Wan K."/>
            <person name="Yu C."/>
            <person name="Celniker S."/>
        </authorList>
    </citation>
    <scope>NUCLEOTIDE SEQUENCE [LARGE SCALE MRNA] OF 1-492 (ISOFORMS D/H)</scope>
    <scope>NUCLEOTIDE SEQUENCE [LARGE SCALE MRNA] OF 373-1539 (ISOFORM C)</scope>
</reference>
<reference key="5">
    <citation type="journal article" date="2008" name="J. Proteome Res.">
        <title>Phosphoproteome analysis of Drosophila melanogaster embryos.</title>
        <authorList>
            <person name="Zhai B."/>
            <person name="Villen J."/>
            <person name="Beausoleil S.A."/>
            <person name="Mintseris J."/>
            <person name="Gygi S.P."/>
        </authorList>
    </citation>
    <scope>PHOSPHORYLATION [LARGE SCALE ANALYSIS] AT SER-542; SER-543; SER-1073; SER-1075 AND SER-1077</scope>
    <scope>IDENTIFICATION BY MASS SPECTROMETRY</scope>
    <source>
        <tissue>Embryo</tissue>
    </source>
</reference>
<keyword id="KW-0025">Alternative splicing</keyword>
<keyword id="KW-0175">Coiled coil</keyword>
<keyword id="KW-0597">Phosphoprotein</keyword>
<keyword id="KW-1185">Reference proteome</keyword>
<keyword id="KW-0677">Repeat</keyword>
<proteinExistence type="evidence at protein level"/>